<feature type="chain" id="PRO_0000258164" description="Large ribosomal subunit protein uL11">
    <location>
        <begin position="1"/>
        <end position="141"/>
    </location>
</feature>
<gene>
    <name evidence="1" type="primary">rplK</name>
    <name type="ordered locus">Ldb1666</name>
</gene>
<protein>
    <recommendedName>
        <fullName evidence="1">Large ribosomal subunit protein uL11</fullName>
    </recommendedName>
    <alternativeName>
        <fullName evidence="2">50S ribosomal protein L11</fullName>
    </alternativeName>
</protein>
<accession>Q1G8Z8</accession>
<sequence length="141" mass="14788">MAKKVINVVKLQIPAGAATPAPPVGPALGQAGINIVGFTKDFNARTADQKGMIIPVVITVYEDRSFDFVTKTPPAPVLLKQAAGIQKASGEPNKNKVGSVTTAQVKEIAETKMKDLNAASIEAAMRMVEGTARSMGIEVKD</sequence>
<keyword id="KW-0488">Methylation</keyword>
<keyword id="KW-1185">Reference proteome</keyword>
<keyword id="KW-0687">Ribonucleoprotein</keyword>
<keyword id="KW-0689">Ribosomal protein</keyword>
<keyword id="KW-0694">RNA-binding</keyword>
<keyword id="KW-0699">rRNA-binding</keyword>
<comment type="function">
    <text evidence="1">Forms part of the ribosomal stalk which helps the ribosome interact with GTP-bound translation factors.</text>
</comment>
<comment type="subunit">
    <text evidence="1">Part of the ribosomal stalk of the 50S ribosomal subunit. Interacts with L10 and the large rRNA to form the base of the stalk. L10 forms an elongated spine to which L12 dimers bind in a sequential fashion forming a multimeric L10(L12)X complex.</text>
</comment>
<comment type="PTM">
    <text evidence="1">One or more lysine residues are methylated.</text>
</comment>
<comment type="similarity">
    <text evidence="1">Belongs to the universal ribosomal protein uL11 family.</text>
</comment>
<reference key="1">
    <citation type="journal article" date="2006" name="Proc. Natl. Acad. Sci. U.S.A.">
        <title>The complete genome sequence of Lactobacillus bulgaricus reveals extensive and ongoing reductive evolution.</title>
        <authorList>
            <person name="van de Guchte M."/>
            <person name="Penaud S."/>
            <person name="Grimaldi C."/>
            <person name="Barbe V."/>
            <person name="Bryson K."/>
            <person name="Nicolas P."/>
            <person name="Robert C."/>
            <person name="Oztas S."/>
            <person name="Mangenot S."/>
            <person name="Couloux A."/>
            <person name="Loux V."/>
            <person name="Dervyn R."/>
            <person name="Bossy R."/>
            <person name="Bolotin A."/>
            <person name="Batto J.-M."/>
            <person name="Walunas T."/>
            <person name="Gibrat J.-F."/>
            <person name="Bessieres P."/>
            <person name="Weissenbach J."/>
            <person name="Ehrlich S.D."/>
            <person name="Maguin E."/>
        </authorList>
    </citation>
    <scope>NUCLEOTIDE SEQUENCE [LARGE SCALE GENOMIC DNA]</scope>
    <source>
        <strain>ATCC 11842 / DSM 20081 / BCRC 10696 / JCM 1002 / NBRC 13953 / NCIMB 11778 / NCTC 12712 / WDCM 00102 / Lb 14</strain>
    </source>
</reference>
<dbReference type="EMBL" id="CR954253">
    <property type="protein sequence ID" value="CAI98455.1"/>
    <property type="molecule type" value="Genomic_DNA"/>
</dbReference>
<dbReference type="RefSeq" id="WP_002876501.1">
    <property type="nucleotide sequence ID" value="NZ_JQAV01000002.1"/>
</dbReference>
<dbReference type="SMR" id="Q1G8Z8"/>
<dbReference type="STRING" id="390333.Ldb1666"/>
<dbReference type="GeneID" id="69669440"/>
<dbReference type="KEGG" id="ldb:Ldb1666"/>
<dbReference type="eggNOG" id="COG0080">
    <property type="taxonomic scope" value="Bacteria"/>
</dbReference>
<dbReference type="HOGENOM" id="CLU_074237_2_1_9"/>
<dbReference type="BioCyc" id="LDEL390333:LDB_RS07195-MONOMER"/>
<dbReference type="Proteomes" id="UP000001259">
    <property type="component" value="Chromosome"/>
</dbReference>
<dbReference type="GO" id="GO:0022625">
    <property type="term" value="C:cytosolic large ribosomal subunit"/>
    <property type="evidence" value="ECO:0007669"/>
    <property type="project" value="TreeGrafter"/>
</dbReference>
<dbReference type="GO" id="GO:0070180">
    <property type="term" value="F:large ribosomal subunit rRNA binding"/>
    <property type="evidence" value="ECO:0007669"/>
    <property type="project" value="UniProtKB-UniRule"/>
</dbReference>
<dbReference type="GO" id="GO:0003735">
    <property type="term" value="F:structural constituent of ribosome"/>
    <property type="evidence" value="ECO:0007669"/>
    <property type="project" value="InterPro"/>
</dbReference>
<dbReference type="GO" id="GO:0006412">
    <property type="term" value="P:translation"/>
    <property type="evidence" value="ECO:0007669"/>
    <property type="project" value="UniProtKB-UniRule"/>
</dbReference>
<dbReference type="CDD" id="cd00349">
    <property type="entry name" value="Ribosomal_L11"/>
    <property type="match status" value="1"/>
</dbReference>
<dbReference type="FunFam" id="1.10.10.250:FF:000001">
    <property type="entry name" value="50S ribosomal protein L11"/>
    <property type="match status" value="1"/>
</dbReference>
<dbReference type="FunFam" id="3.30.1550.10:FF:000001">
    <property type="entry name" value="50S ribosomal protein L11"/>
    <property type="match status" value="1"/>
</dbReference>
<dbReference type="Gene3D" id="1.10.10.250">
    <property type="entry name" value="Ribosomal protein L11, C-terminal domain"/>
    <property type="match status" value="1"/>
</dbReference>
<dbReference type="Gene3D" id="3.30.1550.10">
    <property type="entry name" value="Ribosomal protein L11/L12, N-terminal domain"/>
    <property type="match status" value="1"/>
</dbReference>
<dbReference type="HAMAP" id="MF_00736">
    <property type="entry name" value="Ribosomal_uL11"/>
    <property type="match status" value="1"/>
</dbReference>
<dbReference type="InterPro" id="IPR000911">
    <property type="entry name" value="Ribosomal_uL11"/>
</dbReference>
<dbReference type="InterPro" id="IPR006519">
    <property type="entry name" value="Ribosomal_uL11_bac-typ"/>
</dbReference>
<dbReference type="InterPro" id="IPR020783">
    <property type="entry name" value="Ribosomal_uL11_C"/>
</dbReference>
<dbReference type="InterPro" id="IPR036769">
    <property type="entry name" value="Ribosomal_uL11_C_sf"/>
</dbReference>
<dbReference type="InterPro" id="IPR020785">
    <property type="entry name" value="Ribosomal_uL11_CS"/>
</dbReference>
<dbReference type="InterPro" id="IPR020784">
    <property type="entry name" value="Ribosomal_uL11_N"/>
</dbReference>
<dbReference type="InterPro" id="IPR036796">
    <property type="entry name" value="Ribosomal_uL11_N_sf"/>
</dbReference>
<dbReference type="NCBIfam" id="TIGR01632">
    <property type="entry name" value="L11_bact"/>
    <property type="match status" value="1"/>
</dbReference>
<dbReference type="PANTHER" id="PTHR11661">
    <property type="entry name" value="60S RIBOSOMAL PROTEIN L12"/>
    <property type="match status" value="1"/>
</dbReference>
<dbReference type="PANTHER" id="PTHR11661:SF1">
    <property type="entry name" value="LARGE RIBOSOMAL SUBUNIT PROTEIN UL11M"/>
    <property type="match status" value="1"/>
</dbReference>
<dbReference type="Pfam" id="PF00298">
    <property type="entry name" value="Ribosomal_L11"/>
    <property type="match status" value="1"/>
</dbReference>
<dbReference type="Pfam" id="PF03946">
    <property type="entry name" value="Ribosomal_L11_N"/>
    <property type="match status" value="1"/>
</dbReference>
<dbReference type="SMART" id="SM00649">
    <property type="entry name" value="RL11"/>
    <property type="match status" value="1"/>
</dbReference>
<dbReference type="SUPFAM" id="SSF54747">
    <property type="entry name" value="Ribosomal L11/L12e N-terminal domain"/>
    <property type="match status" value="1"/>
</dbReference>
<dbReference type="SUPFAM" id="SSF46906">
    <property type="entry name" value="Ribosomal protein L11, C-terminal domain"/>
    <property type="match status" value="1"/>
</dbReference>
<dbReference type="PROSITE" id="PS00359">
    <property type="entry name" value="RIBOSOMAL_L11"/>
    <property type="match status" value="1"/>
</dbReference>
<organism>
    <name type="scientific">Lactobacillus delbrueckii subsp. bulgaricus (strain ATCC 11842 / DSM 20081 / BCRC 10696 / JCM 1002 / NBRC 13953 / NCIMB 11778 / NCTC 12712 / WDCM 00102 / Lb 14)</name>
    <dbReference type="NCBI Taxonomy" id="390333"/>
    <lineage>
        <taxon>Bacteria</taxon>
        <taxon>Bacillati</taxon>
        <taxon>Bacillota</taxon>
        <taxon>Bacilli</taxon>
        <taxon>Lactobacillales</taxon>
        <taxon>Lactobacillaceae</taxon>
        <taxon>Lactobacillus</taxon>
    </lineage>
</organism>
<proteinExistence type="inferred from homology"/>
<name>RL11_LACDA</name>
<evidence type="ECO:0000255" key="1">
    <source>
        <dbReference type="HAMAP-Rule" id="MF_00736"/>
    </source>
</evidence>
<evidence type="ECO:0000305" key="2"/>